<accession>Q3SRD1</accession>
<organism>
    <name type="scientific">Nitrobacter winogradskyi (strain ATCC 25391 / DSM 10237 / CIP 104748 / NCIMB 11846 / Nb-255)</name>
    <dbReference type="NCBI Taxonomy" id="323098"/>
    <lineage>
        <taxon>Bacteria</taxon>
        <taxon>Pseudomonadati</taxon>
        <taxon>Pseudomonadota</taxon>
        <taxon>Alphaproteobacteria</taxon>
        <taxon>Hyphomicrobiales</taxon>
        <taxon>Nitrobacteraceae</taxon>
        <taxon>Nitrobacter</taxon>
    </lineage>
</organism>
<proteinExistence type="inferred from homology"/>
<comment type="function">
    <text evidence="1">Involved in protein export. Acts as a chaperone by maintaining the newly synthesized protein in an open conformation. Functions as a peptidyl-prolyl cis-trans isomerase.</text>
</comment>
<comment type="catalytic activity">
    <reaction evidence="1">
        <text>[protein]-peptidylproline (omega=180) = [protein]-peptidylproline (omega=0)</text>
        <dbReference type="Rhea" id="RHEA:16237"/>
        <dbReference type="Rhea" id="RHEA-COMP:10747"/>
        <dbReference type="Rhea" id="RHEA-COMP:10748"/>
        <dbReference type="ChEBI" id="CHEBI:83833"/>
        <dbReference type="ChEBI" id="CHEBI:83834"/>
        <dbReference type="EC" id="5.2.1.8"/>
    </reaction>
</comment>
<comment type="subcellular location">
    <subcellularLocation>
        <location>Cytoplasm</location>
    </subcellularLocation>
    <text evidence="1">About half TF is bound to the ribosome near the polypeptide exit tunnel while the other half is free in the cytoplasm.</text>
</comment>
<comment type="domain">
    <text evidence="1">Consists of 3 domains; the N-terminus binds the ribosome, the middle domain has PPIase activity, while the C-terminus has intrinsic chaperone activity on its own.</text>
</comment>
<comment type="similarity">
    <text evidence="1">Belongs to the FKBP-type PPIase family. Tig subfamily.</text>
</comment>
<dbReference type="EC" id="5.2.1.8" evidence="1"/>
<dbReference type="EMBL" id="CP000115">
    <property type="protein sequence ID" value="ABA05160.1"/>
    <property type="molecule type" value="Genomic_DNA"/>
</dbReference>
<dbReference type="RefSeq" id="WP_011315156.1">
    <property type="nucleotide sequence ID" value="NC_007406.1"/>
</dbReference>
<dbReference type="SMR" id="Q3SRD1"/>
<dbReference type="STRING" id="323098.Nwi_1900"/>
<dbReference type="KEGG" id="nwi:Nwi_1900"/>
<dbReference type="eggNOG" id="COG0544">
    <property type="taxonomic scope" value="Bacteria"/>
</dbReference>
<dbReference type="HOGENOM" id="CLU_033058_2_2_5"/>
<dbReference type="OrthoDB" id="9767721at2"/>
<dbReference type="Proteomes" id="UP000002531">
    <property type="component" value="Chromosome"/>
</dbReference>
<dbReference type="GO" id="GO:0005737">
    <property type="term" value="C:cytoplasm"/>
    <property type="evidence" value="ECO:0007669"/>
    <property type="project" value="UniProtKB-SubCell"/>
</dbReference>
<dbReference type="GO" id="GO:0003755">
    <property type="term" value="F:peptidyl-prolyl cis-trans isomerase activity"/>
    <property type="evidence" value="ECO:0007669"/>
    <property type="project" value="UniProtKB-UniRule"/>
</dbReference>
<dbReference type="GO" id="GO:0044183">
    <property type="term" value="F:protein folding chaperone"/>
    <property type="evidence" value="ECO:0007669"/>
    <property type="project" value="TreeGrafter"/>
</dbReference>
<dbReference type="GO" id="GO:0043022">
    <property type="term" value="F:ribosome binding"/>
    <property type="evidence" value="ECO:0007669"/>
    <property type="project" value="TreeGrafter"/>
</dbReference>
<dbReference type="GO" id="GO:0051083">
    <property type="term" value="P:'de novo' cotranslational protein folding"/>
    <property type="evidence" value="ECO:0007669"/>
    <property type="project" value="TreeGrafter"/>
</dbReference>
<dbReference type="GO" id="GO:0051301">
    <property type="term" value="P:cell division"/>
    <property type="evidence" value="ECO:0007669"/>
    <property type="project" value="UniProtKB-KW"/>
</dbReference>
<dbReference type="GO" id="GO:0061077">
    <property type="term" value="P:chaperone-mediated protein folding"/>
    <property type="evidence" value="ECO:0007669"/>
    <property type="project" value="TreeGrafter"/>
</dbReference>
<dbReference type="GO" id="GO:0015031">
    <property type="term" value="P:protein transport"/>
    <property type="evidence" value="ECO:0007669"/>
    <property type="project" value="UniProtKB-UniRule"/>
</dbReference>
<dbReference type="GO" id="GO:0043335">
    <property type="term" value="P:protein unfolding"/>
    <property type="evidence" value="ECO:0007669"/>
    <property type="project" value="TreeGrafter"/>
</dbReference>
<dbReference type="FunFam" id="3.10.50.40:FF:000001">
    <property type="entry name" value="Trigger factor"/>
    <property type="match status" value="1"/>
</dbReference>
<dbReference type="Gene3D" id="3.10.50.40">
    <property type="match status" value="1"/>
</dbReference>
<dbReference type="Gene3D" id="3.30.70.1050">
    <property type="entry name" value="Trigger factor ribosome-binding domain"/>
    <property type="match status" value="1"/>
</dbReference>
<dbReference type="Gene3D" id="1.10.3120.10">
    <property type="entry name" value="Trigger factor, C-terminal domain"/>
    <property type="match status" value="1"/>
</dbReference>
<dbReference type="HAMAP" id="MF_00303">
    <property type="entry name" value="Trigger_factor_Tig"/>
    <property type="match status" value="1"/>
</dbReference>
<dbReference type="InterPro" id="IPR046357">
    <property type="entry name" value="PPIase_dom_sf"/>
</dbReference>
<dbReference type="InterPro" id="IPR001179">
    <property type="entry name" value="PPIase_FKBP_dom"/>
</dbReference>
<dbReference type="InterPro" id="IPR005215">
    <property type="entry name" value="Trig_fac"/>
</dbReference>
<dbReference type="InterPro" id="IPR008880">
    <property type="entry name" value="Trigger_fac_C"/>
</dbReference>
<dbReference type="InterPro" id="IPR037041">
    <property type="entry name" value="Trigger_fac_C_sf"/>
</dbReference>
<dbReference type="InterPro" id="IPR008881">
    <property type="entry name" value="Trigger_fac_ribosome-bd_bac"/>
</dbReference>
<dbReference type="InterPro" id="IPR036611">
    <property type="entry name" value="Trigger_fac_ribosome-bd_sf"/>
</dbReference>
<dbReference type="InterPro" id="IPR027304">
    <property type="entry name" value="Trigger_fact/SurA_dom_sf"/>
</dbReference>
<dbReference type="NCBIfam" id="TIGR00115">
    <property type="entry name" value="tig"/>
    <property type="match status" value="1"/>
</dbReference>
<dbReference type="PANTHER" id="PTHR30560">
    <property type="entry name" value="TRIGGER FACTOR CHAPERONE AND PEPTIDYL-PROLYL CIS/TRANS ISOMERASE"/>
    <property type="match status" value="1"/>
</dbReference>
<dbReference type="PANTHER" id="PTHR30560:SF3">
    <property type="entry name" value="TRIGGER FACTOR-LIKE PROTEIN TIG, CHLOROPLASTIC"/>
    <property type="match status" value="1"/>
</dbReference>
<dbReference type="Pfam" id="PF00254">
    <property type="entry name" value="FKBP_C"/>
    <property type="match status" value="1"/>
</dbReference>
<dbReference type="Pfam" id="PF05698">
    <property type="entry name" value="Trigger_C"/>
    <property type="match status" value="1"/>
</dbReference>
<dbReference type="Pfam" id="PF05697">
    <property type="entry name" value="Trigger_N"/>
    <property type="match status" value="1"/>
</dbReference>
<dbReference type="PIRSF" id="PIRSF003095">
    <property type="entry name" value="Trigger_factor"/>
    <property type="match status" value="1"/>
</dbReference>
<dbReference type="SUPFAM" id="SSF54534">
    <property type="entry name" value="FKBP-like"/>
    <property type="match status" value="1"/>
</dbReference>
<dbReference type="SUPFAM" id="SSF109998">
    <property type="entry name" value="Triger factor/SurA peptide-binding domain-like"/>
    <property type="match status" value="1"/>
</dbReference>
<dbReference type="SUPFAM" id="SSF102735">
    <property type="entry name" value="Trigger factor ribosome-binding domain"/>
    <property type="match status" value="1"/>
</dbReference>
<dbReference type="PROSITE" id="PS50059">
    <property type="entry name" value="FKBP_PPIASE"/>
    <property type="match status" value="1"/>
</dbReference>
<protein>
    <recommendedName>
        <fullName evidence="1">Trigger factor</fullName>
        <shortName evidence="1">TF</shortName>
        <ecNumber evidence="1">5.2.1.8</ecNumber>
    </recommendedName>
    <alternativeName>
        <fullName evidence="1">PPIase</fullName>
    </alternativeName>
</protein>
<keyword id="KW-0131">Cell cycle</keyword>
<keyword id="KW-0132">Cell division</keyword>
<keyword id="KW-0143">Chaperone</keyword>
<keyword id="KW-0963">Cytoplasm</keyword>
<keyword id="KW-0413">Isomerase</keyword>
<keyword id="KW-1185">Reference proteome</keyword>
<keyword id="KW-0697">Rotamase</keyword>
<evidence type="ECO:0000255" key="1">
    <source>
        <dbReference type="HAMAP-Rule" id="MF_00303"/>
    </source>
</evidence>
<gene>
    <name evidence="1" type="primary">tig</name>
    <name type="ordered locus">Nwi_1900</name>
</gene>
<sequence length="453" mass="50852">MQVNETLAEGLRHEFQVSIPAAEIAAKADERLDDLKDKVKINGFRPGKVPVSHLKKLYGRSVMVETIEDTIRDTNMQIVNDRGLKLAGNPKVTMPSEPKEIEDILAGNSDLSYSVAIEVVPPIELADFKSFTIEKPVVDVSDADVDEAVERIAEQNRTYTTRAEGAKAENGDRITISFKGTIDGELFEGGSSEDILVVLGSNALIPGFEEQLVGAGVGETRTVKASFPGNYADSELAGKDAEFETTVSLIEAPEELKIDDEFAKLLGLEELDQLRQVVREQLSAEFARAMRQHVKRALFDRLDETHKFDAPPTLVEEEFEQVWKTIMAEMEKEKKTFADENTTEEEARAEYRRIADRRVRLSLVLSEIGEKNGITVADDEINRALISRARQTPGREKEIWDYYQRNPQALAQIRAPLFENKVVDFILELATITEKSVTREDLFKEHEAHSAEM</sequence>
<reference key="1">
    <citation type="journal article" date="2006" name="Appl. Environ. Microbiol.">
        <title>Genome sequence of the chemolithoautotrophic nitrite-oxidizing bacterium Nitrobacter winogradskyi Nb-255.</title>
        <authorList>
            <person name="Starkenburg S.R."/>
            <person name="Chain P.S.G."/>
            <person name="Sayavedra-Soto L.A."/>
            <person name="Hauser L."/>
            <person name="Land M.L."/>
            <person name="Larimer F.W."/>
            <person name="Malfatti S.A."/>
            <person name="Klotz M.G."/>
            <person name="Bottomley P.J."/>
            <person name="Arp D.J."/>
            <person name="Hickey W.J."/>
        </authorList>
    </citation>
    <scope>NUCLEOTIDE SEQUENCE [LARGE SCALE GENOMIC DNA]</scope>
    <source>
        <strain>ATCC 25391 / DSM 10237 / CIP 104748 / NCIMB 11846 / Nb-255</strain>
    </source>
</reference>
<name>TIG_NITWN</name>
<feature type="chain" id="PRO_0000256581" description="Trigger factor">
    <location>
        <begin position="1"/>
        <end position="453"/>
    </location>
</feature>
<feature type="domain" description="PPIase FKBP-type" evidence="1">
    <location>
        <begin position="171"/>
        <end position="256"/>
    </location>
</feature>